<feature type="initiator methionine" description="Removed" evidence="4 5">
    <location>
        <position position="1"/>
    </location>
</feature>
<feature type="chain" id="PRO_0000199245" description="Phycobilisome rod-core linker polypeptide CpcG2">
    <location>
        <begin position="2"/>
        <end position="247"/>
    </location>
</feature>
<feature type="domain" description="PBS-linker" evidence="2">
    <location>
        <begin position="11"/>
        <end position="189"/>
    </location>
</feature>
<feature type="region of interest" description="Disordered" evidence="3">
    <location>
        <begin position="223"/>
        <end position="247"/>
    </location>
</feature>
<comment type="function">
    <text>Rod-core linker protein required for attachment of phycocyanin to allophycocyanin in cores of phycobilisomes.</text>
</comment>
<comment type="function">
    <text>Linker polypeptides determine the state of aggregation and the location of the disk-shaped phycobiliprotein units within the phycobilisome and modulate their spectroscopic properties in order to mediate a directed and optimal energy transfer.</text>
</comment>
<comment type="subunit">
    <text evidence="4 5">Part of the phycobilisome, a hemidiscoidal structure that is composed of two distinct substructures: a core complex and a number of rods radiating from the core.</text>
</comment>
<comment type="subcellular location">
    <subcellularLocation>
        <location evidence="5">Cellular thylakoid membrane</location>
        <topology evidence="1">Peripheral membrane protein</topology>
        <orientation evidence="1">Cytoplasmic side</orientation>
    </subcellularLocation>
    <text evidence="5">Part of a phycobilisome rod.</text>
</comment>
<comment type="similarity">
    <text evidence="2">Belongs to the phycobilisome linker protein family.</text>
</comment>
<accession>P29987</accession>
<protein>
    <recommendedName>
        <fullName>Phycobilisome rod-core linker polypeptide CpcG2</fullName>
    </recommendedName>
    <alternativeName>
        <fullName>L-RC 28.5</fullName>
    </alternativeName>
</protein>
<keyword id="KW-0002">3D-structure</keyword>
<keyword id="KW-0042">Antenna complex</keyword>
<keyword id="KW-0903">Direct protein sequencing</keyword>
<keyword id="KW-0472">Membrane</keyword>
<keyword id="KW-0602">Photosynthesis</keyword>
<keyword id="KW-0605">Phycobilisome</keyword>
<keyword id="KW-1185">Reference proteome</keyword>
<keyword id="KW-0793">Thylakoid</keyword>
<reference key="1">
    <citation type="journal article" date="1991" name="Gene">
        <title>A small multigene family encodes the rod-core linker polypeptides of Anabaena sp. PCC7120 phycobilisomes.</title>
        <authorList>
            <person name="Bryant D.A."/>
            <person name="Stirewalt V.L."/>
            <person name="Glauser M."/>
            <person name="Frank G."/>
            <person name="Sidler W."/>
            <person name="Zuber H."/>
        </authorList>
    </citation>
    <scope>NUCLEOTIDE SEQUENCE [GENOMIC DNA]</scope>
    <scope>PROTEIN SEQUENCE OF 2-27</scope>
    <scope>SUBUNIT</scope>
    <source>
        <strain>PCC 7120 / SAG 25.82 / UTEX 2576</strain>
    </source>
</reference>
<reference key="2">
    <citation type="journal article" date="2001" name="DNA Res.">
        <title>Complete genomic sequence of the filamentous nitrogen-fixing cyanobacterium Anabaena sp. strain PCC 7120.</title>
        <authorList>
            <person name="Kaneko T."/>
            <person name="Nakamura Y."/>
            <person name="Wolk C.P."/>
            <person name="Kuritz T."/>
            <person name="Sasamoto S."/>
            <person name="Watanabe A."/>
            <person name="Iriguchi M."/>
            <person name="Ishikawa A."/>
            <person name="Kawashima K."/>
            <person name="Kimura T."/>
            <person name="Kishida Y."/>
            <person name="Kohara M."/>
            <person name="Matsumoto M."/>
            <person name="Matsuno A."/>
            <person name="Muraki A."/>
            <person name="Nakazaki N."/>
            <person name="Shimpo S."/>
            <person name="Sugimoto M."/>
            <person name="Takazawa M."/>
            <person name="Yamada M."/>
            <person name="Yasuda M."/>
            <person name="Tabata S."/>
        </authorList>
    </citation>
    <scope>NUCLEOTIDE SEQUENCE [LARGE SCALE GENOMIC DNA]</scope>
    <source>
        <strain>PCC 7120 / SAG 25.82 / UTEX 2576</strain>
    </source>
</reference>
<reference key="3">
    <citation type="journal article" date="2014" name="Proc. Natl. Acad. Sci. U.S.A.">
        <title>Attachment of phycobilisomes in an antenna-photosystem I supercomplex of cyanobacteria.</title>
        <authorList>
            <person name="Watanabe M."/>
            <person name="Semchonok D.A."/>
            <person name="Webber-Birungi M.T."/>
            <person name="Ehira S."/>
            <person name="Kondo K."/>
            <person name="Narikawa R."/>
            <person name="Ohmori M."/>
            <person name="Boekema E.J."/>
            <person name="Ikeuchi M."/>
        </authorList>
    </citation>
    <scope>PROTEIN SEQUENCE OF 2-15</scope>
    <scope>SUBUNIT</scope>
    <scope>SUBCELLULAR LOCATION</scope>
    <source>
        <strain>PCC 7120 / SAG 25.82 / UTEX 2576</strain>
    </source>
</reference>
<sequence>MSIPLLEYKPSSQNQRVPGYEVPNEDTPRIYRIEDAAYDSELKELIWATYRQVFSEHVILKFFRQGNLESQLKNRAISVRDFVRGLAKSEAFKTLVIKSNSNYRLVELALKRLLGRAPYNKDEEIAWSIKIATNGWDGFVDALLDSEEYQSNFGENIVPYQRRRYKDRPFNLVTPRYGNYWRDKLESERYIEGDIKNFLELAKSIEIKTVTFTPVSTANIKIPDTTRNTTPTGIPISVNPSANFPVR</sequence>
<gene>
    <name evidence="6" type="primary">cpcG2</name>
    <name type="ordered locus">alr0535</name>
</gene>
<dbReference type="EMBL" id="M80435">
    <property type="protein sequence ID" value="AAA22037.1"/>
    <property type="molecule type" value="Genomic_DNA"/>
</dbReference>
<dbReference type="EMBL" id="BA000019">
    <property type="protein sequence ID" value="BAB72493.1"/>
    <property type="molecule type" value="Genomic_DNA"/>
</dbReference>
<dbReference type="PIR" id="AF1873">
    <property type="entry name" value="AF1873"/>
</dbReference>
<dbReference type="PIR" id="JS0593">
    <property type="entry name" value="JS0593"/>
</dbReference>
<dbReference type="RefSeq" id="WP_010994711.1">
    <property type="nucleotide sequence ID" value="NZ_RSCN01000059.1"/>
</dbReference>
<dbReference type="PDB" id="7EYD">
    <property type="method" value="EM"/>
    <property type="resolution" value="3.90 A"/>
    <property type="chains" value="A1/A4=1-247"/>
</dbReference>
<dbReference type="PDBsum" id="7EYD"/>
<dbReference type="EMDB" id="EMD-31381"/>
<dbReference type="SMR" id="P29987"/>
<dbReference type="STRING" id="103690.gene:10492546"/>
<dbReference type="KEGG" id="ana:alr0535"/>
<dbReference type="eggNOG" id="COG0448">
    <property type="taxonomic scope" value="Bacteria"/>
</dbReference>
<dbReference type="OrthoDB" id="448032at2"/>
<dbReference type="Proteomes" id="UP000002483">
    <property type="component" value="Chromosome"/>
</dbReference>
<dbReference type="GO" id="GO:0030089">
    <property type="term" value="C:phycobilisome"/>
    <property type="evidence" value="ECO:0007669"/>
    <property type="project" value="UniProtKB-KW"/>
</dbReference>
<dbReference type="GO" id="GO:0031676">
    <property type="term" value="C:plasma membrane-derived thylakoid membrane"/>
    <property type="evidence" value="ECO:0007669"/>
    <property type="project" value="UniProtKB-SubCell"/>
</dbReference>
<dbReference type="GO" id="GO:0015979">
    <property type="term" value="P:photosynthesis"/>
    <property type="evidence" value="ECO:0007669"/>
    <property type="project" value="UniProtKB-KW"/>
</dbReference>
<dbReference type="Gene3D" id="1.10.3130.20">
    <property type="entry name" value="Phycobilisome linker domain"/>
    <property type="match status" value="1"/>
</dbReference>
<dbReference type="InterPro" id="IPR001297">
    <property type="entry name" value="PBS_linker_dom"/>
</dbReference>
<dbReference type="InterPro" id="IPR038255">
    <property type="entry name" value="PBS_linker_sf"/>
</dbReference>
<dbReference type="InterPro" id="IPR016470">
    <property type="entry name" value="Phycobilisome"/>
</dbReference>
<dbReference type="PANTHER" id="PTHR34011">
    <property type="entry name" value="PHYCOBILISOME 32.1 KDA LINKER POLYPEPTIDE, PHYCOCYANIN-ASSOCIATED, ROD 2-RELATED"/>
    <property type="match status" value="1"/>
</dbReference>
<dbReference type="Pfam" id="PF00427">
    <property type="entry name" value="PBS_linker_poly"/>
    <property type="match status" value="1"/>
</dbReference>
<dbReference type="PIRSF" id="PIRSF005898">
    <property type="entry name" value="Phycobilisome_CpeC/CpcI"/>
    <property type="match status" value="1"/>
</dbReference>
<dbReference type="PROSITE" id="PS51445">
    <property type="entry name" value="PBS_LINKER"/>
    <property type="match status" value="1"/>
</dbReference>
<name>PYG2_NOSS1</name>
<evidence type="ECO:0000250" key="1"/>
<evidence type="ECO:0000255" key="2">
    <source>
        <dbReference type="PROSITE-ProRule" id="PRU00775"/>
    </source>
</evidence>
<evidence type="ECO:0000256" key="3">
    <source>
        <dbReference type="SAM" id="MobiDB-lite"/>
    </source>
</evidence>
<evidence type="ECO:0000269" key="4">
    <source>
    </source>
</evidence>
<evidence type="ECO:0000269" key="5">
    <source>
    </source>
</evidence>
<evidence type="ECO:0000303" key="6">
    <source>
    </source>
</evidence>
<organism>
    <name type="scientific">Nostoc sp. (strain PCC 7120 / SAG 25.82 / UTEX 2576)</name>
    <dbReference type="NCBI Taxonomy" id="103690"/>
    <lineage>
        <taxon>Bacteria</taxon>
        <taxon>Bacillati</taxon>
        <taxon>Cyanobacteriota</taxon>
        <taxon>Cyanophyceae</taxon>
        <taxon>Nostocales</taxon>
        <taxon>Nostocaceae</taxon>
        <taxon>Nostoc</taxon>
    </lineage>
</organism>
<proteinExistence type="evidence at protein level"/>